<dbReference type="EMBL" id="AP009044">
    <property type="protein sequence ID" value="BAF55889.1"/>
    <property type="molecule type" value="Genomic_DNA"/>
</dbReference>
<dbReference type="RefSeq" id="WP_003855068.1">
    <property type="nucleotide sequence ID" value="NC_009342.1"/>
</dbReference>
<dbReference type="SMR" id="A4QI23"/>
<dbReference type="KEGG" id="cgt:cgR_2869"/>
<dbReference type="HOGENOM" id="CLU_078938_5_1_11"/>
<dbReference type="PhylomeDB" id="A4QI23"/>
<dbReference type="Proteomes" id="UP000006698">
    <property type="component" value="Chromosome"/>
</dbReference>
<dbReference type="GO" id="GO:1990904">
    <property type="term" value="C:ribonucleoprotein complex"/>
    <property type="evidence" value="ECO:0007669"/>
    <property type="project" value="UniProtKB-KW"/>
</dbReference>
<dbReference type="GO" id="GO:0005840">
    <property type="term" value="C:ribosome"/>
    <property type="evidence" value="ECO:0007669"/>
    <property type="project" value="UniProtKB-KW"/>
</dbReference>
<dbReference type="GO" id="GO:0019843">
    <property type="term" value="F:rRNA binding"/>
    <property type="evidence" value="ECO:0007669"/>
    <property type="project" value="UniProtKB-UniRule"/>
</dbReference>
<dbReference type="GO" id="GO:0003735">
    <property type="term" value="F:structural constituent of ribosome"/>
    <property type="evidence" value="ECO:0007669"/>
    <property type="project" value="InterPro"/>
</dbReference>
<dbReference type="GO" id="GO:0006412">
    <property type="term" value="P:translation"/>
    <property type="evidence" value="ECO:0007669"/>
    <property type="project" value="UniProtKB-UniRule"/>
</dbReference>
<dbReference type="FunFam" id="3.40.5.10:FF:000003">
    <property type="entry name" value="50S ribosomal protein L9"/>
    <property type="match status" value="1"/>
</dbReference>
<dbReference type="Gene3D" id="3.10.430.100">
    <property type="entry name" value="Ribosomal protein L9, C-terminal domain"/>
    <property type="match status" value="1"/>
</dbReference>
<dbReference type="Gene3D" id="3.40.5.10">
    <property type="entry name" value="Ribosomal protein L9, N-terminal domain"/>
    <property type="match status" value="1"/>
</dbReference>
<dbReference type="HAMAP" id="MF_00503">
    <property type="entry name" value="Ribosomal_bL9"/>
    <property type="match status" value="1"/>
</dbReference>
<dbReference type="InterPro" id="IPR000244">
    <property type="entry name" value="Ribosomal_bL9"/>
</dbReference>
<dbReference type="InterPro" id="IPR009027">
    <property type="entry name" value="Ribosomal_bL9/RNase_H1_N"/>
</dbReference>
<dbReference type="InterPro" id="IPR020594">
    <property type="entry name" value="Ribosomal_bL9_bac/chp"/>
</dbReference>
<dbReference type="InterPro" id="IPR020069">
    <property type="entry name" value="Ribosomal_bL9_C"/>
</dbReference>
<dbReference type="InterPro" id="IPR036791">
    <property type="entry name" value="Ribosomal_bL9_C_sf"/>
</dbReference>
<dbReference type="InterPro" id="IPR020070">
    <property type="entry name" value="Ribosomal_bL9_N"/>
</dbReference>
<dbReference type="InterPro" id="IPR036935">
    <property type="entry name" value="Ribosomal_bL9_N_sf"/>
</dbReference>
<dbReference type="NCBIfam" id="TIGR00158">
    <property type="entry name" value="L9"/>
    <property type="match status" value="1"/>
</dbReference>
<dbReference type="PANTHER" id="PTHR21368">
    <property type="entry name" value="50S RIBOSOMAL PROTEIN L9"/>
    <property type="match status" value="1"/>
</dbReference>
<dbReference type="Pfam" id="PF03948">
    <property type="entry name" value="Ribosomal_L9_C"/>
    <property type="match status" value="1"/>
</dbReference>
<dbReference type="Pfam" id="PF01281">
    <property type="entry name" value="Ribosomal_L9_N"/>
    <property type="match status" value="1"/>
</dbReference>
<dbReference type="SUPFAM" id="SSF55658">
    <property type="entry name" value="L9 N-domain-like"/>
    <property type="match status" value="1"/>
</dbReference>
<dbReference type="SUPFAM" id="SSF55653">
    <property type="entry name" value="Ribosomal protein L9 C-domain"/>
    <property type="match status" value="1"/>
</dbReference>
<dbReference type="PROSITE" id="PS00651">
    <property type="entry name" value="RIBOSOMAL_L9"/>
    <property type="match status" value="1"/>
</dbReference>
<sequence length="150" mass="15911">MKLILTAAVENLGVAGDIVEVKNGYGRNLLLPRGLAIVATPGAEKQIEGIKRAQEAREIRDLDHAREVKAALEALEGVTIAVRTSESGKLFGSVKTDDIVDAVKAAGGPNLDKRAIVLPKNLVKTTGKYQVEAKLTDGIVSRVKFEVVAA</sequence>
<comment type="function">
    <text evidence="1">Binds to the 23S rRNA.</text>
</comment>
<comment type="similarity">
    <text evidence="1">Belongs to the bacterial ribosomal protein bL9 family.</text>
</comment>
<evidence type="ECO:0000255" key="1">
    <source>
        <dbReference type="HAMAP-Rule" id="MF_00503"/>
    </source>
</evidence>
<evidence type="ECO:0000305" key="2"/>
<name>RL9_CORGB</name>
<proteinExistence type="inferred from homology"/>
<gene>
    <name evidence="1" type="primary">rplI</name>
    <name type="ordered locus">cgR_2869</name>
</gene>
<protein>
    <recommendedName>
        <fullName evidence="1">Large ribosomal subunit protein bL9</fullName>
    </recommendedName>
    <alternativeName>
        <fullName evidence="2">50S ribosomal protein L9</fullName>
    </alternativeName>
</protein>
<organism>
    <name type="scientific">Corynebacterium glutamicum (strain R)</name>
    <dbReference type="NCBI Taxonomy" id="340322"/>
    <lineage>
        <taxon>Bacteria</taxon>
        <taxon>Bacillati</taxon>
        <taxon>Actinomycetota</taxon>
        <taxon>Actinomycetes</taxon>
        <taxon>Mycobacteriales</taxon>
        <taxon>Corynebacteriaceae</taxon>
        <taxon>Corynebacterium</taxon>
    </lineage>
</organism>
<feature type="chain" id="PRO_1000014772" description="Large ribosomal subunit protein bL9">
    <location>
        <begin position="1"/>
        <end position="150"/>
    </location>
</feature>
<reference key="1">
    <citation type="journal article" date="2007" name="Microbiology">
        <title>Comparative analysis of the Corynebacterium glutamicum group and complete genome sequence of strain R.</title>
        <authorList>
            <person name="Yukawa H."/>
            <person name="Omumasaba C.A."/>
            <person name="Nonaka H."/>
            <person name="Kos P."/>
            <person name="Okai N."/>
            <person name="Suzuki N."/>
            <person name="Suda M."/>
            <person name="Tsuge Y."/>
            <person name="Watanabe J."/>
            <person name="Ikeda Y."/>
            <person name="Vertes A.A."/>
            <person name="Inui M."/>
        </authorList>
    </citation>
    <scope>NUCLEOTIDE SEQUENCE [LARGE SCALE GENOMIC DNA]</scope>
    <source>
        <strain>R</strain>
    </source>
</reference>
<accession>A4QI23</accession>
<keyword id="KW-0687">Ribonucleoprotein</keyword>
<keyword id="KW-0689">Ribosomal protein</keyword>
<keyword id="KW-0694">RNA-binding</keyword>
<keyword id="KW-0699">rRNA-binding</keyword>